<comment type="catalytic activity">
    <reaction evidence="1">
        <text>tRNA(Gly) + glycine + ATP = glycyl-tRNA(Gly) + AMP + diphosphate</text>
        <dbReference type="Rhea" id="RHEA:16013"/>
        <dbReference type="Rhea" id="RHEA-COMP:9664"/>
        <dbReference type="Rhea" id="RHEA-COMP:9683"/>
        <dbReference type="ChEBI" id="CHEBI:30616"/>
        <dbReference type="ChEBI" id="CHEBI:33019"/>
        <dbReference type="ChEBI" id="CHEBI:57305"/>
        <dbReference type="ChEBI" id="CHEBI:78442"/>
        <dbReference type="ChEBI" id="CHEBI:78522"/>
        <dbReference type="ChEBI" id="CHEBI:456215"/>
        <dbReference type="EC" id="6.1.1.14"/>
    </reaction>
</comment>
<comment type="subunit">
    <text evidence="1">Tetramer of two alpha and two beta subunits.</text>
</comment>
<comment type="subcellular location">
    <subcellularLocation>
        <location evidence="1">Cytoplasm</location>
    </subcellularLocation>
</comment>
<comment type="similarity">
    <text evidence="1">Belongs to the class-II aminoacyl-tRNA synthetase family.</text>
</comment>
<name>SYGA_GLAP5</name>
<keyword id="KW-0030">Aminoacyl-tRNA synthetase</keyword>
<keyword id="KW-0067">ATP-binding</keyword>
<keyword id="KW-0963">Cytoplasm</keyword>
<keyword id="KW-0436">Ligase</keyword>
<keyword id="KW-0547">Nucleotide-binding</keyword>
<keyword id="KW-0648">Protein biosynthesis</keyword>
<keyword id="KW-1185">Reference proteome</keyword>
<protein>
    <recommendedName>
        <fullName evidence="1">Glycine--tRNA ligase alpha subunit</fullName>
        <ecNumber evidence="1">6.1.1.14</ecNumber>
    </recommendedName>
    <alternativeName>
        <fullName evidence="1">Glycyl-tRNA synthetase alpha subunit</fullName>
        <shortName evidence="1">GlyRS</shortName>
    </alternativeName>
</protein>
<evidence type="ECO:0000255" key="1">
    <source>
        <dbReference type="HAMAP-Rule" id="MF_00254"/>
    </source>
</evidence>
<proteinExistence type="inferred from homology"/>
<accession>B8F706</accession>
<dbReference type="EC" id="6.1.1.14" evidence="1"/>
<dbReference type="EMBL" id="CP001321">
    <property type="protein sequence ID" value="ACL33108.1"/>
    <property type="molecule type" value="Genomic_DNA"/>
</dbReference>
<dbReference type="RefSeq" id="WP_005710973.1">
    <property type="nucleotide sequence ID" value="NC_011852.1"/>
</dbReference>
<dbReference type="SMR" id="B8F706"/>
<dbReference type="STRING" id="557723.HAPS_1554"/>
<dbReference type="GeneID" id="66617718"/>
<dbReference type="KEGG" id="hap:HAPS_1554"/>
<dbReference type="HOGENOM" id="CLU_057066_1_0_6"/>
<dbReference type="Proteomes" id="UP000006743">
    <property type="component" value="Chromosome"/>
</dbReference>
<dbReference type="GO" id="GO:0005829">
    <property type="term" value="C:cytosol"/>
    <property type="evidence" value="ECO:0007669"/>
    <property type="project" value="TreeGrafter"/>
</dbReference>
<dbReference type="GO" id="GO:0005524">
    <property type="term" value="F:ATP binding"/>
    <property type="evidence" value="ECO:0007669"/>
    <property type="project" value="UniProtKB-UniRule"/>
</dbReference>
<dbReference type="GO" id="GO:0004820">
    <property type="term" value="F:glycine-tRNA ligase activity"/>
    <property type="evidence" value="ECO:0007669"/>
    <property type="project" value="UniProtKB-UniRule"/>
</dbReference>
<dbReference type="GO" id="GO:0006426">
    <property type="term" value="P:glycyl-tRNA aminoacylation"/>
    <property type="evidence" value="ECO:0007669"/>
    <property type="project" value="UniProtKB-UniRule"/>
</dbReference>
<dbReference type="CDD" id="cd00733">
    <property type="entry name" value="GlyRS_alpha_core"/>
    <property type="match status" value="1"/>
</dbReference>
<dbReference type="FunFam" id="1.20.58.180:FF:000001">
    <property type="entry name" value="Glycine--tRNA ligase alpha subunit"/>
    <property type="match status" value="1"/>
</dbReference>
<dbReference type="FunFam" id="3.30.930.10:FF:000006">
    <property type="entry name" value="Glycine--tRNA ligase alpha subunit"/>
    <property type="match status" value="1"/>
</dbReference>
<dbReference type="Gene3D" id="3.30.930.10">
    <property type="entry name" value="Bira Bifunctional Protein, Domain 2"/>
    <property type="match status" value="1"/>
</dbReference>
<dbReference type="Gene3D" id="1.20.58.180">
    <property type="entry name" value="Class II aaRS and biotin synthetases, domain 2"/>
    <property type="match status" value="1"/>
</dbReference>
<dbReference type="HAMAP" id="MF_00254">
    <property type="entry name" value="Gly_tRNA_synth_alpha"/>
    <property type="match status" value="1"/>
</dbReference>
<dbReference type="InterPro" id="IPR045864">
    <property type="entry name" value="aa-tRNA-synth_II/BPL/LPL"/>
</dbReference>
<dbReference type="InterPro" id="IPR006194">
    <property type="entry name" value="Gly-tRNA-synth_heterodimer"/>
</dbReference>
<dbReference type="InterPro" id="IPR002310">
    <property type="entry name" value="Gly-tRNA_ligase_asu"/>
</dbReference>
<dbReference type="NCBIfam" id="TIGR00388">
    <property type="entry name" value="glyQ"/>
    <property type="match status" value="1"/>
</dbReference>
<dbReference type="NCBIfam" id="NF006827">
    <property type="entry name" value="PRK09348.1"/>
    <property type="match status" value="1"/>
</dbReference>
<dbReference type="PANTHER" id="PTHR30075:SF2">
    <property type="entry name" value="GLYCINE--TRNA LIGASE, CHLOROPLASTIC_MITOCHONDRIAL 2"/>
    <property type="match status" value="1"/>
</dbReference>
<dbReference type="PANTHER" id="PTHR30075">
    <property type="entry name" value="GLYCYL-TRNA SYNTHETASE"/>
    <property type="match status" value="1"/>
</dbReference>
<dbReference type="Pfam" id="PF02091">
    <property type="entry name" value="tRNA-synt_2e"/>
    <property type="match status" value="1"/>
</dbReference>
<dbReference type="PRINTS" id="PR01044">
    <property type="entry name" value="TRNASYNTHGA"/>
</dbReference>
<dbReference type="SUPFAM" id="SSF55681">
    <property type="entry name" value="Class II aaRS and biotin synthetases"/>
    <property type="match status" value="1"/>
</dbReference>
<dbReference type="PROSITE" id="PS50861">
    <property type="entry name" value="AA_TRNA_LIGASE_II_GLYAB"/>
    <property type="match status" value="1"/>
</dbReference>
<sequence>MTAKFNVKTFQGMILALQDYWANQGCTVVQPFDMEVGAGTSHPMTCLRALGPEPMAFAYVQPSRRPTDGRYGENPNRLQHYYQFQVVIKPSPDNIQELYLDSLKMLGFDPTQNDIRFVEDNWENPTLGAWGLGWEVWLNGMEVTQFTYFQQVGGLECKPVTGEITYGLERLAMYIQGVDSVYDLVWSDGPLGKTTYGDVFHQNEVEQSTYNFEYANTDFLFYCFDQYEKEAQELLALEKPLPLPAYERILKAAHSFNLLDARKAISVTERQRYILRIRTLTKGVAEAYYASREALGFPGCK</sequence>
<reference key="1">
    <citation type="journal article" date="2009" name="J. Bacteriol.">
        <title>Complete genome sequence of Haemophilus parasuis SH0165.</title>
        <authorList>
            <person name="Yue M."/>
            <person name="Yang F."/>
            <person name="Yang J."/>
            <person name="Bei W."/>
            <person name="Cai X."/>
            <person name="Chen L."/>
            <person name="Dong J."/>
            <person name="Zhou R."/>
            <person name="Jin M."/>
            <person name="Jin Q."/>
            <person name="Chen H."/>
        </authorList>
    </citation>
    <scope>NUCLEOTIDE SEQUENCE [LARGE SCALE GENOMIC DNA]</scope>
    <source>
        <strain>SH0165</strain>
    </source>
</reference>
<gene>
    <name evidence="1" type="primary">glyQ</name>
    <name type="ordered locus">HAPS_1554</name>
</gene>
<organism>
    <name type="scientific">Glaesserella parasuis serovar 5 (strain SH0165)</name>
    <name type="common">Haemophilus parasuis</name>
    <dbReference type="NCBI Taxonomy" id="557723"/>
    <lineage>
        <taxon>Bacteria</taxon>
        <taxon>Pseudomonadati</taxon>
        <taxon>Pseudomonadota</taxon>
        <taxon>Gammaproteobacteria</taxon>
        <taxon>Pasteurellales</taxon>
        <taxon>Pasteurellaceae</taxon>
        <taxon>Glaesserella</taxon>
    </lineage>
</organism>
<feature type="chain" id="PRO_1000125550" description="Glycine--tRNA ligase alpha subunit">
    <location>
        <begin position="1"/>
        <end position="301"/>
    </location>
</feature>